<comment type="function">
    <text evidence="1">This enzyme is involved in nucleotide metabolism: it produces dUMP, the immediate precursor of thymidine nucleotides and it decreases the intracellular concentration of dUTP so that uracil cannot be incorporated into DNA.</text>
</comment>
<comment type="catalytic activity">
    <reaction evidence="1">
        <text>dUTP + H2O = dUMP + diphosphate + H(+)</text>
        <dbReference type="Rhea" id="RHEA:10248"/>
        <dbReference type="ChEBI" id="CHEBI:15377"/>
        <dbReference type="ChEBI" id="CHEBI:15378"/>
        <dbReference type="ChEBI" id="CHEBI:33019"/>
        <dbReference type="ChEBI" id="CHEBI:61555"/>
        <dbReference type="ChEBI" id="CHEBI:246422"/>
        <dbReference type="EC" id="3.6.1.23"/>
    </reaction>
</comment>
<comment type="cofactor">
    <cofactor evidence="1">
        <name>Mg(2+)</name>
        <dbReference type="ChEBI" id="CHEBI:18420"/>
    </cofactor>
</comment>
<comment type="pathway">
    <text evidence="1">Pyrimidine metabolism; dUMP biosynthesis; dUMP from dCTP (dUTP route): step 2/2.</text>
</comment>
<comment type="similarity">
    <text evidence="1">Belongs to the dUTPase family.</text>
</comment>
<reference key="1">
    <citation type="journal article" date="2006" name="DNA Res.">
        <title>Genome sequence of the cat pathogen, Chlamydophila felis.</title>
        <authorList>
            <person name="Azuma Y."/>
            <person name="Hirakawa H."/>
            <person name="Yamashita A."/>
            <person name="Cai Y."/>
            <person name="Rahman M.A."/>
            <person name="Suzuki H."/>
            <person name="Mitaku S."/>
            <person name="Toh H."/>
            <person name="Goto S."/>
            <person name="Murakami T."/>
            <person name="Sugi K."/>
            <person name="Hayashi H."/>
            <person name="Fukushi H."/>
            <person name="Hattori M."/>
            <person name="Kuhara S."/>
            <person name="Shirai M."/>
        </authorList>
    </citation>
    <scope>NUCLEOTIDE SEQUENCE [LARGE SCALE GENOMIC DNA]</scope>
    <source>
        <strain>Fe/C-56</strain>
    </source>
</reference>
<organism>
    <name type="scientific">Chlamydia felis (strain Fe/C-56)</name>
    <name type="common">Chlamydophila felis</name>
    <dbReference type="NCBI Taxonomy" id="264202"/>
    <lineage>
        <taxon>Bacteria</taxon>
        <taxon>Pseudomonadati</taxon>
        <taxon>Chlamydiota</taxon>
        <taxon>Chlamydiia</taxon>
        <taxon>Chlamydiales</taxon>
        <taxon>Chlamydiaceae</taxon>
        <taxon>Chlamydia/Chlamydophila group</taxon>
        <taxon>Chlamydia</taxon>
    </lineage>
</organism>
<protein>
    <recommendedName>
        <fullName evidence="1">Deoxyuridine 5'-triphosphate nucleotidohydrolase</fullName>
        <shortName evidence="1">dUTPase</shortName>
        <ecNumber evidence="1">3.6.1.23</ecNumber>
    </recommendedName>
    <alternativeName>
        <fullName evidence="1">dUTP pyrophosphatase</fullName>
    </alternativeName>
</protein>
<evidence type="ECO:0000255" key="1">
    <source>
        <dbReference type="HAMAP-Rule" id="MF_00116"/>
    </source>
</evidence>
<dbReference type="EC" id="3.6.1.23" evidence="1"/>
<dbReference type="EMBL" id="AP006861">
    <property type="protein sequence ID" value="BAE81431.1"/>
    <property type="molecule type" value="Genomic_DNA"/>
</dbReference>
<dbReference type="RefSeq" id="WP_011458210.1">
    <property type="nucleotide sequence ID" value="NC_007899.1"/>
</dbReference>
<dbReference type="SMR" id="Q253V7"/>
<dbReference type="STRING" id="264202.CF0659"/>
<dbReference type="KEGG" id="cfe:CF0659"/>
<dbReference type="eggNOG" id="COG0756">
    <property type="taxonomic scope" value="Bacteria"/>
</dbReference>
<dbReference type="HOGENOM" id="CLU_068508_1_2_0"/>
<dbReference type="OrthoDB" id="9809956at2"/>
<dbReference type="UniPathway" id="UPA00610">
    <property type="reaction ID" value="UER00666"/>
</dbReference>
<dbReference type="Proteomes" id="UP000001260">
    <property type="component" value="Chromosome"/>
</dbReference>
<dbReference type="GO" id="GO:0004170">
    <property type="term" value="F:dUTP diphosphatase activity"/>
    <property type="evidence" value="ECO:0007669"/>
    <property type="project" value="UniProtKB-UniRule"/>
</dbReference>
<dbReference type="GO" id="GO:0000287">
    <property type="term" value="F:magnesium ion binding"/>
    <property type="evidence" value="ECO:0007669"/>
    <property type="project" value="UniProtKB-UniRule"/>
</dbReference>
<dbReference type="GO" id="GO:0006226">
    <property type="term" value="P:dUMP biosynthetic process"/>
    <property type="evidence" value="ECO:0007669"/>
    <property type="project" value="UniProtKB-UniRule"/>
</dbReference>
<dbReference type="GO" id="GO:0046081">
    <property type="term" value="P:dUTP catabolic process"/>
    <property type="evidence" value="ECO:0007669"/>
    <property type="project" value="InterPro"/>
</dbReference>
<dbReference type="CDD" id="cd07557">
    <property type="entry name" value="trimeric_dUTPase"/>
    <property type="match status" value="1"/>
</dbReference>
<dbReference type="Gene3D" id="2.70.40.10">
    <property type="match status" value="1"/>
</dbReference>
<dbReference type="HAMAP" id="MF_00116">
    <property type="entry name" value="dUTPase_bact"/>
    <property type="match status" value="1"/>
</dbReference>
<dbReference type="InterPro" id="IPR008181">
    <property type="entry name" value="dUTPase"/>
</dbReference>
<dbReference type="InterPro" id="IPR029054">
    <property type="entry name" value="dUTPase-like"/>
</dbReference>
<dbReference type="InterPro" id="IPR036157">
    <property type="entry name" value="dUTPase-like_sf"/>
</dbReference>
<dbReference type="InterPro" id="IPR033704">
    <property type="entry name" value="dUTPase_trimeric"/>
</dbReference>
<dbReference type="NCBIfam" id="TIGR00576">
    <property type="entry name" value="dut"/>
    <property type="match status" value="1"/>
</dbReference>
<dbReference type="NCBIfam" id="NF001862">
    <property type="entry name" value="PRK00601.1"/>
    <property type="match status" value="1"/>
</dbReference>
<dbReference type="PANTHER" id="PTHR11241">
    <property type="entry name" value="DEOXYURIDINE 5'-TRIPHOSPHATE NUCLEOTIDOHYDROLASE"/>
    <property type="match status" value="1"/>
</dbReference>
<dbReference type="PANTHER" id="PTHR11241:SF0">
    <property type="entry name" value="DEOXYURIDINE 5'-TRIPHOSPHATE NUCLEOTIDOHYDROLASE"/>
    <property type="match status" value="1"/>
</dbReference>
<dbReference type="Pfam" id="PF00692">
    <property type="entry name" value="dUTPase"/>
    <property type="match status" value="1"/>
</dbReference>
<dbReference type="SUPFAM" id="SSF51283">
    <property type="entry name" value="dUTPase-like"/>
    <property type="match status" value="1"/>
</dbReference>
<gene>
    <name evidence="1" type="primary">dut</name>
    <name type="ordered locus">CF0659</name>
</gene>
<accession>Q253V7</accession>
<name>DUT_CHLFF</name>
<proteinExistence type="inferred from homology"/>
<feature type="chain" id="PRO_1000015460" description="Deoxyuridine 5'-triphosphate nucleotidohydrolase">
    <location>
        <begin position="1"/>
        <end position="147"/>
    </location>
</feature>
<feature type="binding site" evidence="1">
    <location>
        <begin position="63"/>
        <end position="65"/>
    </location>
    <ligand>
        <name>substrate</name>
    </ligand>
</feature>
<feature type="binding site" evidence="1">
    <location>
        <position position="76"/>
    </location>
    <ligand>
        <name>substrate</name>
    </ligand>
</feature>
<feature type="binding site" evidence="1">
    <location>
        <begin position="80"/>
        <end position="82"/>
    </location>
    <ligand>
        <name>substrate</name>
    </ligand>
</feature>
<keyword id="KW-0378">Hydrolase</keyword>
<keyword id="KW-0460">Magnesium</keyword>
<keyword id="KW-0479">Metal-binding</keyword>
<keyword id="KW-0546">Nucleotide metabolism</keyword>
<sequence length="147" mass="15754">MTIFCELESGVDLPEYATEGASGADLRANIEEPIAVLPGQRVLVPTGIKMQIPQGYEVQVRPRSGLALKHGIMVVNSPGTIDADYRGEVCIILANFGESTFIIEPKMRVAQAVVAPVVQAKFIVVDQEEGLTTTSRGSRGFGHTGEK</sequence>